<comment type="function">
    <text evidence="1">Transcriptional regulator that represses the expression of the lsr operon in the absence of the quorum-sensing signaling molecule autoinducer 2 (AI-2) (By similarity). It also represses the expression of the lsrRK operon (By similarity). Acts by binding to the intergenic region between the lsr operon and lsrR (By similarity). In the presence of phosphorylated autoinducer-2 (phospho-AI-2), LsrR is inactivated, leading to the transcription of the genes (By similarity).</text>
</comment>
<comment type="activity regulation">
    <text evidence="1">Inactivated by phosphorylated autoinducer-2 (phospho-AI-2) (By similarity). Phospho-AI-2 acts by binding to LsrR, which is then unable to bind to the promoter regions, allowing the transcription of the target genes (By similarity).</text>
</comment>
<comment type="subcellular location">
    <subcellularLocation>
        <location evidence="2">Cytoplasm</location>
    </subcellularLocation>
</comment>
<comment type="similarity">
    <text evidence="2">Belongs to the SorC transcriptional regulatory family.</text>
</comment>
<sequence length="319" mass="34405">MSDNTLVSDYGMCEEEQMARIAWFYYHDGLTQSEISERLGLTRLKVSRLLEKGHQSGIIRVQINSRFEGCLEYENALRNHFALQNIRVLPALPDADIGLRLGIGAAHMLMESLRPQQLLAVGFGEATMTTLKHLSGFISAQQIRLVTLSGGVGPYMTGIGQLDAACSVSIMPAPLRASSQEIACTLRNENSVRDVMLTAQAADAAIVGIGAINQKDQASILKSGYITQGEQLMIGRKGAVGDILGYFFDAHGEIIPGIKIHNELIGLKLNSLSTIPTVIGVAGGEQKAEAIIAAMRGNYINALVTDQKTAGKIIQLIEK</sequence>
<proteinExistence type="inferred from homology"/>
<accession>Q57HE3</accession>
<evidence type="ECO:0000250" key="1">
    <source>
        <dbReference type="UniProtKB" id="Q8ZKQ5"/>
    </source>
</evidence>
<evidence type="ECO:0000305" key="2"/>
<dbReference type="EMBL" id="AE017220">
    <property type="protein sequence ID" value="AAX67869.1"/>
    <property type="molecule type" value="Genomic_DNA"/>
</dbReference>
<dbReference type="SMR" id="Q57HE3"/>
<dbReference type="KEGG" id="sec:SCH_3963"/>
<dbReference type="HOGENOM" id="CLU_054506_0_1_6"/>
<dbReference type="Proteomes" id="UP000000538">
    <property type="component" value="Chromosome"/>
</dbReference>
<dbReference type="GO" id="GO:0005737">
    <property type="term" value="C:cytoplasm"/>
    <property type="evidence" value="ECO:0007669"/>
    <property type="project" value="UniProtKB-SubCell"/>
</dbReference>
<dbReference type="GO" id="GO:0030246">
    <property type="term" value="F:carbohydrate binding"/>
    <property type="evidence" value="ECO:0007669"/>
    <property type="project" value="InterPro"/>
</dbReference>
<dbReference type="GO" id="GO:0003677">
    <property type="term" value="F:DNA binding"/>
    <property type="evidence" value="ECO:0007669"/>
    <property type="project" value="UniProtKB-KW"/>
</dbReference>
<dbReference type="Gene3D" id="3.40.50.1360">
    <property type="match status" value="1"/>
</dbReference>
<dbReference type="Gene3D" id="1.10.10.10">
    <property type="entry name" value="Winged helix-like DNA-binding domain superfamily/Winged helix DNA-binding domain"/>
    <property type="match status" value="1"/>
</dbReference>
<dbReference type="InterPro" id="IPR037171">
    <property type="entry name" value="NagB/RpiA_transferase-like"/>
</dbReference>
<dbReference type="InterPro" id="IPR051054">
    <property type="entry name" value="SorC_transcr_regulators"/>
</dbReference>
<dbReference type="InterPro" id="IPR007324">
    <property type="entry name" value="Sugar-bd_dom_put"/>
</dbReference>
<dbReference type="InterPro" id="IPR036388">
    <property type="entry name" value="WH-like_DNA-bd_sf"/>
</dbReference>
<dbReference type="NCBIfam" id="NF011947">
    <property type="entry name" value="PRK15418.1"/>
    <property type="match status" value="1"/>
</dbReference>
<dbReference type="PANTHER" id="PTHR34294:SF1">
    <property type="entry name" value="TRANSCRIPTIONAL REGULATOR LSRR"/>
    <property type="match status" value="1"/>
</dbReference>
<dbReference type="PANTHER" id="PTHR34294">
    <property type="entry name" value="TRANSCRIPTIONAL REGULATOR-RELATED"/>
    <property type="match status" value="1"/>
</dbReference>
<dbReference type="Pfam" id="PF04198">
    <property type="entry name" value="Sugar-bind"/>
    <property type="match status" value="1"/>
</dbReference>
<dbReference type="SUPFAM" id="SSF100950">
    <property type="entry name" value="NagB/RpiA/CoA transferase-like"/>
    <property type="match status" value="1"/>
</dbReference>
<protein>
    <recommendedName>
        <fullName evidence="1">Transcriptional regulator LsrR</fullName>
    </recommendedName>
</protein>
<name>LSRR_SALCH</name>
<feature type="chain" id="PRO_0000351619" description="Transcriptional regulator LsrR">
    <location>
        <begin position="1"/>
        <end position="319"/>
    </location>
</feature>
<feature type="DNA-binding region" description="H-T-H motif" evidence="2">
    <location>
        <begin position="32"/>
        <end position="55"/>
    </location>
</feature>
<reference key="1">
    <citation type="journal article" date="2005" name="Nucleic Acids Res.">
        <title>The genome sequence of Salmonella enterica serovar Choleraesuis, a highly invasive and resistant zoonotic pathogen.</title>
        <authorList>
            <person name="Chiu C.-H."/>
            <person name="Tang P."/>
            <person name="Chu C."/>
            <person name="Hu S."/>
            <person name="Bao Q."/>
            <person name="Yu J."/>
            <person name="Chou Y.-Y."/>
            <person name="Wang H.-S."/>
            <person name="Lee Y.-S."/>
        </authorList>
    </citation>
    <scope>NUCLEOTIDE SEQUENCE [LARGE SCALE GENOMIC DNA]</scope>
    <source>
        <strain>SC-B67</strain>
    </source>
</reference>
<organism>
    <name type="scientific">Salmonella choleraesuis (strain SC-B67)</name>
    <dbReference type="NCBI Taxonomy" id="321314"/>
    <lineage>
        <taxon>Bacteria</taxon>
        <taxon>Pseudomonadati</taxon>
        <taxon>Pseudomonadota</taxon>
        <taxon>Gammaproteobacteria</taxon>
        <taxon>Enterobacterales</taxon>
        <taxon>Enterobacteriaceae</taxon>
        <taxon>Salmonella</taxon>
    </lineage>
</organism>
<keyword id="KW-0963">Cytoplasm</keyword>
<keyword id="KW-0238">DNA-binding</keyword>
<keyword id="KW-0678">Repressor</keyword>
<keyword id="KW-0804">Transcription</keyword>
<keyword id="KW-0805">Transcription regulation</keyword>
<gene>
    <name type="primary">lsrR</name>
    <name type="ordered locus">SCH_3963</name>
</gene>